<reference key="1">
    <citation type="journal article" date="2002" name="Proc. Natl. Acad. Sci. U.S.A.">
        <title>The Brucella suis genome reveals fundamental similarities between animal and plant pathogens and symbionts.</title>
        <authorList>
            <person name="Paulsen I.T."/>
            <person name="Seshadri R."/>
            <person name="Nelson K.E."/>
            <person name="Eisen J.A."/>
            <person name="Heidelberg J.F."/>
            <person name="Read T.D."/>
            <person name="Dodson R.J."/>
            <person name="Umayam L.A."/>
            <person name="Brinkac L.M."/>
            <person name="Beanan M.J."/>
            <person name="Daugherty S.C."/>
            <person name="DeBoy R.T."/>
            <person name="Durkin A.S."/>
            <person name="Kolonay J.F."/>
            <person name="Madupu R."/>
            <person name="Nelson W.C."/>
            <person name="Ayodeji B."/>
            <person name="Kraul M."/>
            <person name="Shetty J."/>
            <person name="Malek J.A."/>
            <person name="Van Aken S.E."/>
            <person name="Riedmuller S."/>
            <person name="Tettelin H."/>
            <person name="Gill S.R."/>
            <person name="White O."/>
            <person name="Salzberg S.L."/>
            <person name="Hoover D.L."/>
            <person name="Lindler L.E."/>
            <person name="Halling S.M."/>
            <person name="Boyle S.M."/>
            <person name="Fraser C.M."/>
        </authorList>
    </citation>
    <scope>NUCLEOTIDE SEQUENCE [LARGE SCALE GENOMIC DNA]</scope>
    <source>
        <strain>1330</strain>
    </source>
</reference>
<reference key="2">
    <citation type="journal article" date="2011" name="J. Bacteriol.">
        <title>Revised genome sequence of Brucella suis 1330.</title>
        <authorList>
            <person name="Tae H."/>
            <person name="Shallom S."/>
            <person name="Settlage R."/>
            <person name="Preston D."/>
            <person name="Adams L.G."/>
            <person name="Garner H.R."/>
        </authorList>
    </citation>
    <scope>NUCLEOTIDE SEQUENCE [LARGE SCALE GENOMIC DNA]</scope>
    <source>
        <strain>1330</strain>
    </source>
</reference>
<accession>P65448</accession>
<accession>G0KCI1</accession>
<accession>Q8YBR7</accession>
<comment type="catalytic activity">
    <reaction evidence="1">
        <text>L-methionyl-[protein] + [thioredoxin]-disulfide + H2O = L-methionyl-(R)-S-oxide-[protein] + [thioredoxin]-dithiol</text>
        <dbReference type="Rhea" id="RHEA:24164"/>
        <dbReference type="Rhea" id="RHEA-COMP:10698"/>
        <dbReference type="Rhea" id="RHEA-COMP:10700"/>
        <dbReference type="Rhea" id="RHEA-COMP:12313"/>
        <dbReference type="Rhea" id="RHEA-COMP:12314"/>
        <dbReference type="ChEBI" id="CHEBI:15377"/>
        <dbReference type="ChEBI" id="CHEBI:16044"/>
        <dbReference type="ChEBI" id="CHEBI:29950"/>
        <dbReference type="ChEBI" id="CHEBI:45764"/>
        <dbReference type="ChEBI" id="CHEBI:50058"/>
        <dbReference type="EC" id="1.8.4.12"/>
    </reaction>
</comment>
<comment type="similarity">
    <text evidence="1">Belongs to the MsrB Met sulfoxide reductase family.</text>
</comment>
<evidence type="ECO:0000255" key="1">
    <source>
        <dbReference type="HAMAP-Rule" id="MF_01400"/>
    </source>
</evidence>
<evidence type="ECO:0000255" key="2">
    <source>
        <dbReference type="PROSITE-ProRule" id="PRU01126"/>
    </source>
</evidence>
<name>MSRB_BRUSU</name>
<organism>
    <name type="scientific">Brucella suis biovar 1 (strain 1330)</name>
    <dbReference type="NCBI Taxonomy" id="204722"/>
    <lineage>
        <taxon>Bacteria</taxon>
        <taxon>Pseudomonadati</taxon>
        <taxon>Pseudomonadota</taxon>
        <taxon>Alphaproteobacteria</taxon>
        <taxon>Hyphomicrobiales</taxon>
        <taxon>Brucellaceae</taxon>
        <taxon>Brucella/Ochrobactrum group</taxon>
        <taxon>Brucella</taxon>
    </lineage>
</organism>
<feature type="chain" id="PRO_0000140265" description="Peptide methionine sulfoxide reductase MsrB">
    <location>
        <begin position="1"/>
        <end position="146"/>
    </location>
</feature>
<feature type="domain" description="MsrB" evidence="2">
    <location>
        <begin position="6"/>
        <end position="129"/>
    </location>
</feature>
<feature type="active site" description="Nucleophile" evidence="2">
    <location>
        <position position="118"/>
    </location>
</feature>
<gene>
    <name evidence="1" type="primary">msrB</name>
    <name type="ordered locus">BRA0446</name>
    <name type="ordered locus">BS1330_II0443</name>
</gene>
<protein>
    <recommendedName>
        <fullName evidence="1">Peptide methionine sulfoxide reductase MsrB</fullName>
        <ecNumber evidence="1">1.8.4.12</ecNumber>
    </recommendedName>
    <alternativeName>
        <fullName evidence="1">Peptide-methionine (R)-S-oxide reductase</fullName>
    </alternativeName>
</protein>
<proteinExistence type="inferred from homology"/>
<sequence length="146" mass="16281">MKYQKSAEAIAKLSAEQYRVTQENGTERPGTGEYLYNKEPGIYVDIVSGEPLFASSDKYESHCGWPSFTKPIERANVTELTDMSHGMVRTEVRSAHGDSHLGHVFPDGPVDRGGLRYCINSASLRFVPKDRMEAEGYGDYLDQVEG</sequence>
<keyword id="KW-0560">Oxidoreductase</keyword>
<dbReference type="EC" id="1.8.4.12" evidence="1"/>
<dbReference type="EMBL" id="AE014292">
    <property type="protein sequence ID" value="AAN33640.1"/>
    <property type="molecule type" value="Genomic_DNA"/>
</dbReference>
<dbReference type="EMBL" id="CP002998">
    <property type="protein sequence ID" value="AEM19919.1"/>
    <property type="molecule type" value="Genomic_DNA"/>
</dbReference>
<dbReference type="RefSeq" id="WP_004681816.1">
    <property type="nucleotide sequence ID" value="NZ_KN046805.1"/>
</dbReference>
<dbReference type="SMR" id="P65448"/>
<dbReference type="GeneID" id="97535410"/>
<dbReference type="KEGG" id="bms:BRA0446"/>
<dbReference type="KEGG" id="bsi:BS1330_II0443"/>
<dbReference type="PATRIC" id="fig|204722.21.peg.41"/>
<dbReference type="HOGENOM" id="CLU_031040_8_5_5"/>
<dbReference type="PhylomeDB" id="P65448"/>
<dbReference type="Proteomes" id="UP000007104">
    <property type="component" value="Chromosome II"/>
</dbReference>
<dbReference type="GO" id="GO:0005737">
    <property type="term" value="C:cytoplasm"/>
    <property type="evidence" value="ECO:0007669"/>
    <property type="project" value="TreeGrafter"/>
</dbReference>
<dbReference type="GO" id="GO:0033743">
    <property type="term" value="F:peptide-methionine (R)-S-oxide reductase activity"/>
    <property type="evidence" value="ECO:0007669"/>
    <property type="project" value="UniProtKB-UniRule"/>
</dbReference>
<dbReference type="GO" id="GO:0030091">
    <property type="term" value="P:protein repair"/>
    <property type="evidence" value="ECO:0007669"/>
    <property type="project" value="InterPro"/>
</dbReference>
<dbReference type="GO" id="GO:0006979">
    <property type="term" value="P:response to oxidative stress"/>
    <property type="evidence" value="ECO:0007669"/>
    <property type="project" value="InterPro"/>
</dbReference>
<dbReference type="FunFam" id="2.170.150.20:FF:000003">
    <property type="entry name" value="Peptide methionine sulfoxide reductase MsrB"/>
    <property type="match status" value="1"/>
</dbReference>
<dbReference type="Gene3D" id="2.170.150.20">
    <property type="entry name" value="Peptide methionine sulfoxide reductase"/>
    <property type="match status" value="1"/>
</dbReference>
<dbReference type="HAMAP" id="MF_01400">
    <property type="entry name" value="MsrB"/>
    <property type="match status" value="1"/>
</dbReference>
<dbReference type="InterPro" id="IPR028427">
    <property type="entry name" value="Met_Sox_Rdtase_MsrB"/>
</dbReference>
<dbReference type="InterPro" id="IPR002579">
    <property type="entry name" value="Met_Sox_Rdtase_MsrB_dom"/>
</dbReference>
<dbReference type="InterPro" id="IPR011057">
    <property type="entry name" value="Mss4-like_sf"/>
</dbReference>
<dbReference type="NCBIfam" id="TIGR00357">
    <property type="entry name" value="peptide-methionine (R)-S-oxide reductase MsrB"/>
    <property type="match status" value="1"/>
</dbReference>
<dbReference type="PANTHER" id="PTHR10173">
    <property type="entry name" value="METHIONINE SULFOXIDE REDUCTASE"/>
    <property type="match status" value="1"/>
</dbReference>
<dbReference type="PANTHER" id="PTHR10173:SF59">
    <property type="entry name" value="PEPTIDE METHIONINE SULFOXIDE REDUCTASE MSRA_MSRB"/>
    <property type="match status" value="1"/>
</dbReference>
<dbReference type="Pfam" id="PF01641">
    <property type="entry name" value="SelR"/>
    <property type="match status" value="1"/>
</dbReference>
<dbReference type="SUPFAM" id="SSF51316">
    <property type="entry name" value="Mss4-like"/>
    <property type="match status" value="1"/>
</dbReference>
<dbReference type="PROSITE" id="PS51790">
    <property type="entry name" value="MSRB"/>
    <property type="match status" value="1"/>
</dbReference>